<protein>
    <recommendedName>
        <fullName evidence="1">Ribosome maturation factor RimP</fullName>
    </recommendedName>
</protein>
<reference key="1">
    <citation type="journal article" date="2003" name="Appl. Microbiol. Biotechnol.">
        <title>The Corynebacterium glutamicum genome: features and impacts on biotechnological processes.</title>
        <authorList>
            <person name="Ikeda M."/>
            <person name="Nakagawa S."/>
        </authorList>
    </citation>
    <scope>NUCLEOTIDE SEQUENCE [LARGE SCALE GENOMIC DNA]</scope>
    <source>
        <strain>ATCC 13032 / DSM 20300 / JCM 1318 / BCRC 11384 / CCUG 27702 / LMG 3730 / NBRC 12168 / NCIMB 10025 / NRRL B-2784 / 534</strain>
    </source>
</reference>
<reference key="2">
    <citation type="journal article" date="2003" name="J. Biotechnol.">
        <title>The complete Corynebacterium glutamicum ATCC 13032 genome sequence and its impact on the production of L-aspartate-derived amino acids and vitamins.</title>
        <authorList>
            <person name="Kalinowski J."/>
            <person name="Bathe B."/>
            <person name="Bartels D."/>
            <person name="Bischoff N."/>
            <person name="Bott M."/>
            <person name="Burkovski A."/>
            <person name="Dusch N."/>
            <person name="Eggeling L."/>
            <person name="Eikmanns B.J."/>
            <person name="Gaigalat L."/>
            <person name="Goesmann A."/>
            <person name="Hartmann M."/>
            <person name="Huthmacher K."/>
            <person name="Kraemer R."/>
            <person name="Linke B."/>
            <person name="McHardy A.C."/>
            <person name="Meyer F."/>
            <person name="Moeckel B."/>
            <person name="Pfefferle W."/>
            <person name="Puehler A."/>
            <person name="Rey D.A."/>
            <person name="Rueckert C."/>
            <person name="Rupp O."/>
            <person name="Sahm H."/>
            <person name="Wendisch V.F."/>
            <person name="Wiegraebe I."/>
            <person name="Tauch A."/>
        </authorList>
    </citation>
    <scope>NUCLEOTIDE SEQUENCE [LARGE SCALE GENOMIC DNA]</scope>
    <source>
        <strain>ATCC 13032 / DSM 20300 / JCM 1318 / BCRC 11384 / CCUG 27702 / LMG 3730 / NBRC 12168 / NCIMB 10025 / NRRL B-2784 / 534</strain>
    </source>
</reference>
<comment type="function">
    <text evidence="1">Required for maturation of 30S ribosomal subunits.</text>
</comment>
<comment type="subcellular location">
    <subcellularLocation>
        <location evidence="1">Cytoplasm</location>
    </subcellularLocation>
</comment>
<comment type="similarity">
    <text evidence="1">Belongs to the RimP family.</text>
</comment>
<proteinExistence type="inferred from homology"/>
<name>RIMP_CORGL</name>
<gene>
    <name evidence="1" type="primary">rimP</name>
    <name type="ordered locus">Cgl1989</name>
    <name type="ordered locus">cg2179</name>
</gene>
<evidence type="ECO:0000255" key="1">
    <source>
        <dbReference type="HAMAP-Rule" id="MF_01077"/>
    </source>
</evidence>
<keyword id="KW-0963">Cytoplasm</keyword>
<keyword id="KW-1185">Reference proteome</keyword>
<keyword id="KW-0690">Ribosome biogenesis</keyword>
<feature type="chain" id="PRO_0000181865" description="Ribosome maturation factor RimP">
    <location>
        <begin position="1"/>
        <end position="178"/>
    </location>
</feature>
<sequence>MAFPTTEILSALIEPLAASHKFDLEGLKVTKAGPKSAVAIKVDSDSRPDLDQLEVFSQEIGELFDAAEQRGELNFGAGYTLEVSTPGVDNPLTLPRHWRRNRGRLVALDQDGKKRVARIGALNDAETHVVLIERNKKLLEVTTLELAHSPRAVVEIEFAKPAQDETALAESTFDEATA</sequence>
<organism>
    <name type="scientific">Corynebacterium glutamicum (strain ATCC 13032 / DSM 20300 / JCM 1318 / BCRC 11384 / CCUG 27702 / LMG 3730 / NBRC 12168 / NCIMB 10025 / NRRL B-2784 / 534)</name>
    <dbReference type="NCBI Taxonomy" id="196627"/>
    <lineage>
        <taxon>Bacteria</taxon>
        <taxon>Bacillati</taxon>
        <taxon>Actinomycetota</taxon>
        <taxon>Actinomycetes</taxon>
        <taxon>Mycobacteriales</taxon>
        <taxon>Corynebacteriaceae</taxon>
        <taxon>Corynebacterium</taxon>
    </lineage>
</organism>
<dbReference type="EMBL" id="BA000036">
    <property type="protein sequence ID" value="BAB99381.1"/>
    <property type="molecule type" value="Genomic_DNA"/>
</dbReference>
<dbReference type="EMBL" id="BX927153">
    <property type="protein sequence ID" value="CAF20329.1"/>
    <property type="molecule type" value="Genomic_DNA"/>
</dbReference>
<dbReference type="RefSeq" id="NP_601194.1">
    <property type="nucleotide sequence ID" value="NC_003450.3"/>
</dbReference>
<dbReference type="RefSeq" id="WP_011014804.1">
    <property type="nucleotide sequence ID" value="NC_006958.1"/>
</dbReference>
<dbReference type="SMR" id="Q8NP37"/>
<dbReference type="STRING" id="196627.cg2179"/>
<dbReference type="GeneID" id="1019945"/>
<dbReference type="KEGG" id="cgb:cg2179"/>
<dbReference type="KEGG" id="cgl:Cgl1989"/>
<dbReference type="PATRIC" id="fig|196627.13.peg.1927"/>
<dbReference type="eggNOG" id="COG0779">
    <property type="taxonomic scope" value="Bacteria"/>
</dbReference>
<dbReference type="HOGENOM" id="CLU_070525_3_0_11"/>
<dbReference type="OrthoDB" id="9805006at2"/>
<dbReference type="BioCyc" id="CORYNE:G18NG-11580-MONOMER"/>
<dbReference type="Proteomes" id="UP000000582">
    <property type="component" value="Chromosome"/>
</dbReference>
<dbReference type="Proteomes" id="UP000001009">
    <property type="component" value="Chromosome"/>
</dbReference>
<dbReference type="GO" id="GO:0005829">
    <property type="term" value="C:cytosol"/>
    <property type="evidence" value="ECO:0007669"/>
    <property type="project" value="TreeGrafter"/>
</dbReference>
<dbReference type="GO" id="GO:0000028">
    <property type="term" value="P:ribosomal small subunit assembly"/>
    <property type="evidence" value="ECO:0007669"/>
    <property type="project" value="TreeGrafter"/>
</dbReference>
<dbReference type="GO" id="GO:0006412">
    <property type="term" value="P:translation"/>
    <property type="evidence" value="ECO:0007669"/>
    <property type="project" value="TreeGrafter"/>
</dbReference>
<dbReference type="Gene3D" id="3.30.300.70">
    <property type="entry name" value="RimP-like superfamily, N-terminal"/>
    <property type="match status" value="1"/>
</dbReference>
<dbReference type="HAMAP" id="MF_01077">
    <property type="entry name" value="RimP"/>
    <property type="match status" value="1"/>
</dbReference>
<dbReference type="InterPro" id="IPR003728">
    <property type="entry name" value="Ribosome_maturation_RimP"/>
</dbReference>
<dbReference type="InterPro" id="IPR028998">
    <property type="entry name" value="RimP_C"/>
</dbReference>
<dbReference type="InterPro" id="IPR028989">
    <property type="entry name" value="RimP_N"/>
</dbReference>
<dbReference type="InterPro" id="IPR035956">
    <property type="entry name" value="RimP_N_sf"/>
</dbReference>
<dbReference type="NCBIfam" id="NF000930">
    <property type="entry name" value="PRK00092.2-2"/>
    <property type="match status" value="1"/>
</dbReference>
<dbReference type="PANTHER" id="PTHR33867">
    <property type="entry name" value="RIBOSOME MATURATION FACTOR RIMP"/>
    <property type="match status" value="1"/>
</dbReference>
<dbReference type="PANTHER" id="PTHR33867:SF1">
    <property type="entry name" value="RIBOSOME MATURATION FACTOR RIMP"/>
    <property type="match status" value="1"/>
</dbReference>
<dbReference type="Pfam" id="PF17384">
    <property type="entry name" value="DUF150_C"/>
    <property type="match status" value="1"/>
</dbReference>
<dbReference type="Pfam" id="PF02576">
    <property type="entry name" value="RimP_N"/>
    <property type="match status" value="1"/>
</dbReference>
<dbReference type="SUPFAM" id="SSF75420">
    <property type="entry name" value="YhbC-like, N-terminal domain"/>
    <property type="match status" value="1"/>
</dbReference>
<accession>Q8NP37</accession>